<feature type="chain" id="PRO_0000461400" description="Acyl-CoA ligase sidI">
    <location>
        <begin position="1"/>
        <end position="576"/>
    </location>
</feature>
<feature type="short sequence motif" description="PTS2-type peroxisomal targeting signal" evidence="2">
    <location>
        <begin position="3"/>
        <end position="11"/>
    </location>
</feature>
<feature type="binding site" evidence="1">
    <location>
        <position position="439"/>
    </location>
    <ligand>
        <name>ATP</name>
        <dbReference type="ChEBI" id="CHEBI:30616"/>
    </ligand>
</feature>
<feature type="binding site" evidence="1">
    <location>
        <position position="454"/>
    </location>
    <ligand>
        <name>ATP</name>
        <dbReference type="ChEBI" id="CHEBI:30616"/>
    </ligand>
</feature>
<feature type="binding site" evidence="1">
    <location>
        <position position="553"/>
    </location>
    <ligand>
        <name>ATP</name>
        <dbReference type="ChEBI" id="CHEBI:30616"/>
    </ligand>
</feature>
<keyword id="KW-0067">ATP-binding</keyword>
<keyword id="KW-0436">Ligase</keyword>
<keyword id="KW-0547">Nucleotide-binding</keyword>
<keyword id="KW-0576">Peroxisome</keyword>
<keyword id="KW-1185">Reference proteome</keyword>
<keyword id="KW-0843">Virulence</keyword>
<accession>J5JLF2</accession>
<reference key="1">
    <citation type="journal article" date="2012" name="Sci. Rep.">
        <title>Genomic perspectives on the evolution of fungal entomopathogenicity in Beauveria bassiana.</title>
        <authorList>
            <person name="Xiao G."/>
            <person name="Ying S.-H."/>
            <person name="Zheng P."/>
            <person name="Wang Z.-L."/>
            <person name="Zhang S."/>
            <person name="Xie X.-Q."/>
            <person name="Shang Y."/>
            <person name="St Leger R.J."/>
            <person name="Zhao G.-P."/>
            <person name="Wang C."/>
            <person name="Feng M.-G."/>
        </authorList>
    </citation>
    <scope>NUCLEOTIDE SEQUENCE [LARGE SCALE GENOMIC DNA]</scope>
    <source>
        <strain>ARSEF 2860</strain>
    </source>
</reference>
<reference key="2">
    <citation type="journal article" date="2024" name="J. Agric. Food Chem.">
        <title>Unlocking the siderophore biosynthesis pathway and its biological functions in the fungal insect pathogen Beauveria bassiana.</title>
        <authorList>
            <person name="Sun T.F."/>
            <person name="Ge Z.W."/>
            <person name="Xu H.R."/>
            <person name="Zhang H."/>
            <person name="Huang S.S."/>
            <person name="Feng M.G."/>
            <person name="Ying S.H."/>
        </authorList>
    </citation>
    <scope>FUNCTION</scope>
    <scope>DISRUPTION PHENOTYPE</scope>
    <scope>SUBCELLULAR LOCATION</scope>
    <scope>PATHWAY</scope>
</reference>
<dbReference type="EC" id="6.2.1.-" evidence="6"/>
<dbReference type="EMBL" id="JH725171">
    <property type="protein sequence ID" value="EJP63991.1"/>
    <property type="molecule type" value="Genomic_DNA"/>
</dbReference>
<dbReference type="RefSeq" id="XP_008600315.1">
    <property type="nucleotide sequence ID" value="XM_008602093.1"/>
</dbReference>
<dbReference type="SMR" id="J5JLF2"/>
<dbReference type="FunCoup" id="J5JLF2">
    <property type="interactions" value="573"/>
</dbReference>
<dbReference type="STRING" id="655819.J5JLF2"/>
<dbReference type="GeneID" id="19890008"/>
<dbReference type="HOGENOM" id="CLU_000022_59_7_1"/>
<dbReference type="InParanoid" id="J5JLF2"/>
<dbReference type="OrthoDB" id="2092at474943"/>
<dbReference type="Proteomes" id="UP000002762">
    <property type="component" value="Unassembled WGS sequence"/>
</dbReference>
<dbReference type="GO" id="GO:0005777">
    <property type="term" value="C:peroxisome"/>
    <property type="evidence" value="ECO:0007669"/>
    <property type="project" value="UniProtKB-SubCell"/>
</dbReference>
<dbReference type="GO" id="GO:0005524">
    <property type="term" value="F:ATP binding"/>
    <property type="evidence" value="ECO:0007669"/>
    <property type="project" value="UniProtKB-KW"/>
</dbReference>
<dbReference type="GO" id="GO:0031956">
    <property type="term" value="F:medium-chain fatty acid-CoA ligase activity"/>
    <property type="evidence" value="ECO:0007669"/>
    <property type="project" value="TreeGrafter"/>
</dbReference>
<dbReference type="GO" id="GO:0006631">
    <property type="term" value="P:fatty acid metabolic process"/>
    <property type="evidence" value="ECO:0007669"/>
    <property type="project" value="TreeGrafter"/>
</dbReference>
<dbReference type="FunFam" id="3.40.50.12780:FF:000003">
    <property type="entry name" value="Long-chain-fatty-acid--CoA ligase FadD"/>
    <property type="match status" value="1"/>
</dbReference>
<dbReference type="Gene3D" id="3.30.300.30">
    <property type="match status" value="1"/>
</dbReference>
<dbReference type="Gene3D" id="3.40.50.12780">
    <property type="entry name" value="N-terminal domain of ligase-like"/>
    <property type="match status" value="1"/>
</dbReference>
<dbReference type="InterPro" id="IPR025110">
    <property type="entry name" value="AMP-bd_C"/>
</dbReference>
<dbReference type="InterPro" id="IPR045851">
    <property type="entry name" value="AMP-bd_C_sf"/>
</dbReference>
<dbReference type="InterPro" id="IPR020845">
    <property type="entry name" value="AMP-binding_CS"/>
</dbReference>
<dbReference type="InterPro" id="IPR000873">
    <property type="entry name" value="AMP-dep_synth/lig_dom"/>
</dbReference>
<dbReference type="InterPro" id="IPR042099">
    <property type="entry name" value="ANL_N_sf"/>
</dbReference>
<dbReference type="PANTHER" id="PTHR43201:SF6">
    <property type="entry name" value="ACYL COA SYNTHETASE (EUROFUNG)"/>
    <property type="match status" value="1"/>
</dbReference>
<dbReference type="PANTHER" id="PTHR43201">
    <property type="entry name" value="ACYL-COA SYNTHETASE"/>
    <property type="match status" value="1"/>
</dbReference>
<dbReference type="Pfam" id="PF00501">
    <property type="entry name" value="AMP-binding"/>
    <property type="match status" value="1"/>
</dbReference>
<dbReference type="Pfam" id="PF13193">
    <property type="entry name" value="AMP-binding_C"/>
    <property type="match status" value="1"/>
</dbReference>
<dbReference type="SUPFAM" id="SSF56801">
    <property type="entry name" value="Acetyl-CoA synthetase-like"/>
    <property type="match status" value="1"/>
</dbReference>
<dbReference type="PROSITE" id="PS00455">
    <property type="entry name" value="AMP_BINDING"/>
    <property type="match status" value="1"/>
</dbReference>
<proteinExistence type="inferred from homology"/>
<organism>
    <name type="scientific">Beauveria bassiana (strain ARSEF 2860)</name>
    <name type="common">White muscardine disease fungus</name>
    <name type="synonym">Tritirachium shiotae</name>
    <dbReference type="NCBI Taxonomy" id="655819"/>
    <lineage>
        <taxon>Eukaryota</taxon>
        <taxon>Fungi</taxon>
        <taxon>Dikarya</taxon>
        <taxon>Ascomycota</taxon>
        <taxon>Pezizomycotina</taxon>
        <taxon>Sordariomycetes</taxon>
        <taxon>Hypocreomycetidae</taxon>
        <taxon>Hypocreales</taxon>
        <taxon>Cordycipitaceae</taxon>
        <taxon>Beauveria</taxon>
    </lineage>
</organism>
<comment type="function">
    <text evidence="2 3">Acyl-CoA ligase; part of the gene cluster that mediates the biosynthesis of at least 11 siderophores, including beauverichelin A, dimerumic acid (DA), Na-dimethyl coprogen (NADC), eleutherazine B, ferricrocin (FC), fusarinine A, fusarinine C (FsC), metachelin A, mevalonolactone, rhodotorulic acid (RA) and tenellin (PubMed:39109629). This cocktail of siderophores for iron metabolism is essential for virulence, and more specifically for the fungal virulence in penetrating through the host cuticle (PubMed:39109629). Siderophore synthesis is also involved in conidial germination under iron-deficient conditions (PubMed:39109629). For biosynthesis of fusarinine C, the transacylase SIDF transfers anhydromevalonyl to N(5)-hydroxyornithine. The required anhydromevalonyl-CoA moiety is derived from mevalonate by CoA ligation and dehydration catalyzed by SIDI and sidH respectively (By similarity).</text>
</comment>
<comment type="pathway">
    <text evidence="3">Siderophore biosynthesis.</text>
</comment>
<comment type="subcellular location">
    <subcellularLocation>
        <location evidence="3">Peroxisome</location>
    </subcellularLocation>
    <text evidence="3">Targeted to peroxisomes via its PTS2-type peroxisomal targeting signal.</text>
</comment>
<comment type="disruption phenotype">
    <text evidence="3">Leads to increased sensitivity to oxidative stress and iron-starvation, reduced conidial germination as well as reduced virulence (PubMed:39109629). Impairs the production of the 6 siderophores beauverichelin A, dimerumic acid (DA), Na-dimethyl coprogen (NADC), fusarinine A, fusarinine C (FsC), rhodotorulic acid (RA) and tenellin; but increases the production of mevalonolactone and eleutherazine B (PubMed:39109629).</text>
</comment>
<comment type="similarity">
    <text evidence="5">Belongs to the ATP-dependent AMP-binding enzyme family.</text>
</comment>
<protein>
    <recommendedName>
        <fullName evidence="4">Acyl-CoA ligase sidI</fullName>
        <ecNumber evidence="6">6.2.1.-</ecNumber>
    </recommendedName>
    <alternativeName>
        <fullName evidence="4">Siderophore biosynthesis cluster protein I</fullName>
    </alternativeName>
</protein>
<sequence length="576" mass="63186">MTPVTTKTIRPEVPPETEKLSLLHGPIDPPLVDLTLGELLELQTYQHGTHECLVIPWTGARWTYNDLNQQSSWLAHALLDLGIGVGDRVGIMAGNCEQYAAVFFAAAKIGAILVILNNTYTPTEAMYGIQFSECKVVFTTRKIGRMDNTRLLGDLDNLDRGPKVVMLRGESANYATYDDLIESAMGKSHEKLYEAMRRVSPHQVVNLQFTSGTTGLPKAAMLTHHNLVNNSRFIGDRMRLTSADVLCCPPPLFHCFGLVLGLLAIVTHGGKIVYPAEVFDIAATLRAISDENCTAVHGVPAMFDSLFQAEFPANFRCDRLRTGIIAGAPVPRYLMELLVEKFGMTEFTSSYGLTEASPTCFNAFTDDSIDTRLTTVGTLMPHAHAKIVDRDGNIVPVGVRGELCIGGYQLQAGYWNNSAKTAEVMVRDATGVLWLHTGDEAVFDEHGYCSITGRFKDIIIRGGENIYPLEIEERLLAHPAISRAIVVGLKSNHYGEVVGAFLERAPTAAKKPSDQELRDWVRKRLGGHKSPAHLFWLGEGGVPADVPLTGSGKVKKFEMAKLGDELLRKETPVAKL</sequence>
<name>SIDI_BEAB2</name>
<evidence type="ECO:0000250" key="1">
    <source>
        <dbReference type="UniProtKB" id="Q08AH3"/>
    </source>
</evidence>
<evidence type="ECO:0000250" key="2">
    <source>
        <dbReference type="UniProtKB" id="Q4WR83"/>
    </source>
</evidence>
<evidence type="ECO:0000269" key="3">
    <source>
    </source>
</evidence>
<evidence type="ECO:0000303" key="4">
    <source>
    </source>
</evidence>
<evidence type="ECO:0000305" key="5"/>
<evidence type="ECO:0000305" key="6">
    <source>
    </source>
</evidence>
<gene>
    <name evidence="4" type="primary">SIDI</name>
    <name type="ORF">BBA_06996</name>
</gene>